<name>PLSX_CLOBK</name>
<feature type="chain" id="PRO_1000089893" description="Phosphate acyltransferase">
    <location>
        <begin position="1"/>
        <end position="335"/>
    </location>
</feature>
<reference key="1">
    <citation type="journal article" date="2007" name="PLoS ONE">
        <title>Analysis of the neurotoxin complex genes in Clostridium botulinum A1-A4 and B1 strains: BoNT/A3, /Ba4 and /B1 clusters are located within plasmids.</title>
        <authorList>
            <person name="Smith T.J."/>
            <person name="Hill K.K."/>
            <person name="Foley B.T."/>
            <person name="Detter J.C."/>
            <person name="Munk A.C."/>
            <person name="Bruce D.C."/>
            <person name="Doggett N.A."/>
            <person name="Smith L.A."/>
            <person name="Marks J.D."/>
            <person name="Xie G."/>
            <person name="Brettin T.S."/>
        </authorList>
    </citation>
    <scope>NUCLEOTIDE SEQUENCE [LARGE SCALE GENOMIC DNA]</scope>
    <source>
        <strain>Okra / Type B1</strain>
    </source>
</reference>
<keyword id="KW-0963">Cytoplasm</keyword>
<keyword id="KW-0444">Lipid biosynthesis</keyword>
<keyword id="KW-0443">Lipid metabolism</keyword>
<keyword id="KW-0594">Phospholipid biosynthesis</keyword>
<keyword id="KW-1208">Phospholipid metabolism</keyword>
<keyword id="KW-0808">Transferase</keyword>
<comment type="function">
    <text evidence="1">Catalyzes the reversible formation of acyl-phosphate (acyl-PO(4)) from acyl-[acyl-carrier-protein] (acyl-ACP). This enzyme utilizes acyl-ACP as fatty acyl donor, but not acyl-CoA.</text>
</comment>
<comment type="catalytic activity">
    <reaction evidence="1">
        <text>a fatty acyl-[ACP] + phosphate = an acyl phosphate + holo-[ACP]</text>
        <dbReference type="Rhea" id="RHEA:42292"/>
        <dbReference type="Rhea" id="RHEA-COMP:9685"/>
        <dbReference type="Rhea" id="RHEA-COMP:14125"/>
        <dbReference type="ChEBI" id="CHEBI:43474"/>
        <dbReference type="ChEBI" id="CHEBI:59918"/>
        <dbReference type="ChEBI" id="CHEBI:64479"/>
        <dbReference type="ChEBI" id="CHEBI:138651"/>
        <dbReference type="EC" id="2.3.1.274"/>
    </reaction>
</comment>
<comment type="pathway">
    <text evidence="1">Lipid metabolism; phospholipid metabolism.</text>
</comment>
<comment type="subunit">
    <text evidence="1">Homodimer. Probably interacts with PlsY.</text>
</comment>
<comment type="subcellular location">
    <subcellularLocation>
        <location evidence="1">Cytoplasm</location>
    </subcellularLocation>
    <text evidence="1">Associated with the membrane possibly through PlsY.</text>
</comment>
<comment type="similarity">
    <text evidence="1">Belongs to the PlsX family.</text>
</comment>
<accession>B1II87</accession>
<protein>
    <recommendedName>
        <fullName evidence="1">Phosphate acyltransferase</fullName>
        <ecNumber evidence="1">2.3.1.274</ecNumber>
    </recommendedName>
    <alternativeName>
        <fullName evidence="1">Acyl-ACP phosphotransacylase</fullName>
    </alternativeName>
    <alternativeName>
        <fullName evidence="1">Acyl-[acyl-carrier-protein]--phosphate acyltransferase</fullName>
    </alternativeName>
    <alternativeName>
        <fullName evidence="1">Phosphate-acyl-ACP acyltransferase</fullName>
    </alternativeName>
</protein>
<organism>
    <name type="scientific">Clostridium botulinum (strain Okra / Type B1)</name>
    <dbReference type="NCBI Taxonomy" id="498213"/>
    <lineage>
        <taxon>Bacteria</taxon>
        <taxon>Bacillati</taxon>
        <taxon>Bacillota</taxon>
        <taxon>Clostridia</taxon>
        <taxon>Eubacteriales</taxon>
        <taxon>Clostridiaceae</taxon>
        <taxon>Clostridium</taxon>
    </lineage>
</organism>
<proteinExistence type="inferred from homology"/>
<sequence length="335" mass="36205">MIIAVDGMGGDFAPELVVEGCIQAVKEYEGIHIIITGKKELIKNELDKREYNGNKIEILNAEEVISTNEAPVKAIRRKKDSSMVKALELVKEGKAQAVISAGSTGALMAGATFVLGRIKGINRVCLAPLLPGAKAPFMIADAGANVDCKAEYLVQFAMMGKVYFESVLGVKSPTVGLVNIGAEEEKGNELTKAAYKLLKDTDFNFIGNIEPRDIPRGEVNIAVCDGFIGNTVLKTYEGVASNLFSMLKKEIMASTRGKIGGALLKPVFKDFKKKFDYTEYGGSPFLGAKGICIKAHGSSDAKAFKNAIRQAKICYDKKIIEEIENNLGNLIENNI</sequence>
<dbReference type="EC" id="2.3.1.274" evidence="1"/>
<dbReference type="EMBL" id="CP000939">
    <property type="protein sequence ID" value="ACA44887.1"/>
    <property type="molecule type" value="Genomic_DNA"/>
</dbReference>
<dbReference type="RefSeq" id="WP_003396953.1">
    <property type="nucleotide sequence ID" value="NC_010516.1"/>
</dbReference>
<dbReference type="SMR" id="B1II87"/>
<dbReference type="KEGG" id="cbb:CLD_2184"/>
<dbReference type="HOGENOM" id="CLU_039379_1_1_9"/>
<dbReference type="UniPathway" id="UPA00085"/>
<dbReference type="Proteomes" id="UP000008541">
    <property type="component" value="Chromosome"/>
</dbReference>
<dbReference type="GO" id="GO:0005737">
    <property type="term" value="C:cytoplasm"/>
    <property type="evidence" value="ECO:0007669"/>
    <property type="project" value="UniProtKB-SubCell"/>
</dbReference>
<dbReference type="GO" id="GO:0043811">
    <property type="term" value="F:phosphate:acyl-[acyl carrier protein] acyltransferase activity"/>
    <property type="evidence" value="ECO:0007669"/>
    <property type="project" value="UniProtKB-UniRule"/>
</dbReference>
<dbReference type="GO" id="GO:0006633">
    <property type="term" value="P:fatty acid biosynthetic process"/>
    <property type="evidence" value="ECO:0007669"/>
    <property type="project" value="UniProtKB-UniRule"/>
</dbReference>
<dbReference type="GO" id="GO:0008654">
    <property type="term" value="P:phospholipid biosynthetic process"/>
    <property type="evidence" value="ECO:0007669"/>
    <property type="project" value="UniProtKB-KW"/>
</dbReference>
<dbReference type="Gene3D" id="3.40.718.10">
    <property type="entry name" value="Isopropylmalate Dehydrogenase"/>
    <property type="match status" value="1"/>
</dbReference>
<dbReference type="HAMAP" id="MF_00019">
    <property type="entry name" value="PlsX"/>
    <property type="match status" value="1"/>
</dbReference>
<dbReference type="InterPro" id="IPR003664">
    <property type="entry name" value="FA_synthesis"/>
</dbReference>
<dbReference type="InterPro" id="IPR012281">
    <property type="entry name" value="Phospholipid_synth_PlsX-like"/>
</dbReference>
<dbReference type="NCBIfam" id="TIGR00182">
    <property type="entry name" value="plsX"/>
    <property type="match status" value="1"/>
</dbReference>
<dbReference type="PANTHER" id="PTHR30100">
    <property type="entry name" value="FATTY ACID/PHOSPHOLIPID SYNTHESIS PROTEIN PLSX"/>
    <property type="match status" value="1"/>
</dbReference>
<dbReference type="PANTHER" id="PTHR30100:SF1">
    <property type="entry name" value="PHOSPHATE ACYLTRANSFERASE"/>
    <property type="match status" value="1"/>
</dbReference>
<dbReference type="Pfam" id="PF02504">
    <property type="entry name" value="FA_synthesis"/>
    <property type="match status" value="1"/>
</dbReference>
<dbReference type="PIRSF" id="PIRSF002465">
    <property type="entry name" value="Phsphlp_syn_PlsX"/>
    <property type="match status" value="1"/>
</dbReference>
<dbReference type="SUPFAM" id="SSF53659">
    <property type="entry name" value="Isocitrate/Isopropylmalate dehydrogenase-like"/>
    <property type="match status" value="1"/>
</dbReference>
<evidence type="ECO:0000255" key="1">
    <source>
        <dbReference type="HAMAP-Rule" id="MF_00019"/>
    </source>
</evidence>
<gene>
    <name evidence="1" type="primary">plsX</name>
    <name type="ordered locus">CLD_2184</name>
</gene>